<reference key="1">
    <citation type="journal article" date="1996" name="Mech. Dev.">
        <title>Embryonic expression of eph signalling factors in Xenopus.</title>
        <authorList>
            <person name="Weinstein D.C."/>
            <person name="Rahman S.M."/>
            <person name="Ruiz J.C."/>
            <person name="Hemmati-Brivanlou A."/>
        </authorList>
    </citation>
    <scope>NUCLEOTIDE SEQUENCE [MRNA] (ISOFORMS A AND A')</scope>
</reference>
<protein>
    <recommendedName>
        <fullName>Ephrin-A1</fullName>
    </recommendedName>
    <alternativeName>
        <fullName>EPH-related receptor tyrosine kinase ligand 1</fullName>
        <shortName>LERK-1</shortName>
    </alternativeName>
    <alternativeName>
        <fullName>xELF-a</fullName>
    </alternativeName>
</protein>
<gene>
    <name type="primary">efna1</name>
    <name type="synonym">elf</name>
    <name type="synonym">epgl1</name>
</gene>
<comment type="function">
    <text>Cell surface GPI-bound ligand for Eph receptors, a family of receptor tyrosine kinases which are crucial for migration, repulsion and adhesion during neuronal, vascular and epithelial development. Binds promiscuously Eph receptors residing on adjacent cells, leading to contact-dependent bidirectional signaling into neighboring cells.</text>
</comment>
<comment type="subunit">
    <text evidence="1">Binds to the receptor tyrosine kinases EPHA2, EPHA4, EPHA5, EPHA6 and EPHA7. Also binds with low affinity to EPHA1 (By similarity).</text>
</comment>
<comment type="subcellular location">
    <molecule>Isoform A</molecule>
    <subcellularLocation>
        <location evidence="1">Membrane</location>
        <topology evidence="1">Lipid-anchor</topology>
        <topology evidence="1">GPI-anchor</topology>
    </subcellularLocation>
</comment>
<comment type="alternative products">
    <event type="alternative splicing"/>
    <isoform>
        <id>P52794-1</id>
        <name>A</name>
        <sequence type="displayed"/>
    </isoform>
    <isoform>
        <id>P52794-2</id>
        <name>A'</name>
        <sequence type="described" ref="VSP_001447"/>
    </isoform>
</comment>
<comment type="similarity">
    <text evidence="3">Belongs to the ephrin family.</text>
</comment>
<proteinExistence type="evidence at transcript level"/>
<sequence length="216" mass="24755">MMELYRAAVQLIVGVGLGVGLWLREAQGERHIVFWNSSNYRFMQEDYTVQVQLNDYLDIVCPYYEEGSVAGHTVERYTLFLVDYEEYETCKPKSKDQVRWECNKPFAPHGPEKFCEKFQKFTPFTLGTEFREGRTYYYISKPIHYHGETCMRLRVHVSGRTTPPPVNVHTPRSHIQSDEPEVPLPGVMKSVAGNSAAPGTPCTLYGLLLAALLLRL</sequence>
<accession>P52794</accession>
<evidence type="ECO:0000250" key="1"/>
<evidence type="ECO:0000255" key="2"/>
<evidence type="ECO:0000255" key="3">
    <source>
        <dbReference type="PROSITE-ProRule" id="PRU00884"/>
    </source>
</evidence>
<evidence type="ECO:0000256" key="4">
    <source>
        <dbReference type="SAM" id="MobiDB-lite"/>
    </source>
</evidence>
<evidence type="ECO:0000303" key="5">
    <source>
    </source>
</evidence>
<dbReference type="EMBL" id="U31204">
    <property type="protein sequence ID" value="AAA74485.1"/>
    <property type="molecule type" value="mRNA"/>
</dbReference>
<dbReference type="EMBL" id="U31205">
    <property type="protein sequence ID" value="AAA74486.1"/>
    <property type="molecule type" value="mRNA"/>
</dbReference>
<dbReference type="RefSeq" id="NP_001081390.1">
    <molecule id="P52794-2"/>
    <property type="nucleotide sequence ID" value="NM_001087921.1"/>
</dbReference>
<dbReference type="SMR" id="P52794"/>
<dbReference type="GlyCosmos" id="P52794">
    <property type="glycosylation" value="1 site, No reported glycans"/>
</dbReference>
<dbReference type="GeneID" id="397809"/>
<dbReference type="KEGG" id="xla:397809"/>
<dbReference type="AGR" id="Xenbase:XB-GENE-6252357"/>
<dbReference type="CTD" id="397809"/>
<dbReference type="Xenbase" id="XB-GENE-6252357">
    <property type="gene designation" value="efna1.S"/>
</dbReference>
<dbReference type="OrthoDB" id="8774972at2759"/>
<dbReference type="Proteomes" id="UP000186698">
    <property type="component" value="Chromosome 8S"/>
</dbReference>
<dbReference type="Bgee" id="397809">
    <property type="expression patterns" value="Expressed in oocyte and 19 other cell types or tissues"/>
</dbReference>
<dbReference type="GO" id="GO:0005886">
    <property type="term" value="C:plasma membrane"/>
    <property type="evidence" value="ECO:0000318"/>
    <property type="project" value="GO_Central"/>
</dbReference>
<dbReference type="GO" id="GO:0098552">
    <property type="term" value="C:side of membrane"/>
    <property type="evidence" value="ECO:0007669"/>
    <property type="project" value="UniProtKB-KW"/>
</dbReference>
<dbReference type="GO" id="GO:0046875">
    <property type="term" value="F:ephrin receptor binding"/>
    <property type="evidence" value="ECO:0000318"/>
    <property type="project" value="GO_Central"/>
</dbReference>
<dbReference type="GO" id="GO:0007411">
    <property type="term" value="P:axon guidance"/>
    <property type="evidence" value="ECO:0000318"/>
    <property type="project" value="GO_Central"/>
</dbReference>
<dbReference type="GO" id="GO:0048013">
    <property type="term" value="P:ephrin receptor signaling pathway"/>
    <property type="evidence" value="ECO:0000250"/>
    <property type="project" value="UniProtKB"/>
</dbReference>
<dbReference type="GO" id="GO:0061002">
    <property type="term" value="P:negative regulation of dendritic spine morphogenesis"/>
    <property type="evidence" value="ECO:0000250"/>
    <property type="project" value="UniProtKB"/>
</dbReference>
<dbReference type="GO" id="GO:0050730">
    <property type="term" value="P:regulation of peptidyl-tyrosine phosphorylation"/>
    <property type="evidence" value="ECO:0000250"/>
    <property type="project" value="UniProtKB"/>
</dbReference>
<dbReference type="CDD" id="cd10425">
    <property type="entry name" value="Ephrin-A_Ectodomain"/>
    <property type="match status" value="1"/>
</dbReference>
<dbReference type="FunFam" id="2.60.40.420:FF:000017">
    <property type="entry name" value="ephrin-A1"/>
    <property type="match status" value="1"/>
</dbReference>
<dbReference type="Gene3D" id="2.60.40.420">
    <property type="entry name" value="Cupredoxins - blue copper proteins"/>
    <property type="match status" value="1"/>
</dbReference>
<dbReference type="InterPro" id="IPR008972">
    <property type="entry name" value="Cupredoxin"/>
</dbReference>
<dbReference type="InterPro" id="IPR031328">
    <property type="entry name" value="Ephrin"/>
</dbReference>
<dbReference type="InterPro" id="IPR034252">
    <property type="entry name" value="Ephrin-A_Ecto"/>
</dbReference>
<dbReference type="InterPro" id="IPR019765">
    <property type="entry name" value="Ephrin_CS"/>
</dbReference>
<dbReference type="InterPro" id="IPR001799">
    <property type="entry name" value="Ephrin_RBD"/>
</dbReference>
<dbReference type="PANTHER" id="PTHR11304">
    <property type="entry name" value="EPHRIN"/>
    <property type="match status" value="1"/>
</dbReference>
<dbReference type="PANTHER" id="PTHR11304:SF19">
    <property type="entry name" value="EPHRIN-A1"/>
    <property type="match status" value="1"/>
</dbReference>
<dbReference type="Pfam" id="PF00812">
    <property type="entry name" value="Ephrin"/>
    <property type="match status" value="1"/>
</dbReference>
<dbReference type="PRINTS" id="PR01347">
    <property type="entry name" value="EPHRIN"/>
</dbReference>
<dbReference type="SUPFAM" id="SSF49503">
    <property type="entry name" value="Cupredoxins"/>
    <property type="match status" value="1"/>
</dbReference>
<dbReference type="PROSITE" id="PS01299">
    <property type="entry name" value="EPHRIN_RBD_1"/>
    <property type="match status" value="1"/>
</dbReference>
<dbReference type="PROSITE" id="PS51551">
    <property type="entry name" value="EPHRIN_RBD_2"/>
    <property type="match status" value="1"/>
</dbReference>
<feature type="signal peptide" evidence="2">
    <location>
        <begin position="1"/>
        <end position="28"/>
    </location>
</feature>
<feature type="chain" id="PRO_0000008359" description="Ephrin-A1">
    <location>
        <begin position="29"/>
        <end position="195"/>
    </location>
</feature>
<feature type="propeptide" id="PRO_0000008360" description="Removed in mature form" evidence="2">
    <location>
        <begin position="196"/>
        <end position="216"/>
    </location>
</feature>
<feature type="domain" description="Ephrin RBD" evidence="3">
    <location>
        <begin position="29"/>
        <end position="161"/>
    </location>
</feature>
<feature type="region of interest" description="Disordered" evidence="4">
    <location>
        <begin position="162"/>
        <end position="181"/>
    </location>
</feature>
<feature type="lipid moiety-binding region" description="GPI-anchor amidated serine" evidence="2">
    <location>
        <position position="195"/>
    </location>
</feature>
<feature type="glycosylation site" description="N-linked (GlcNAc...) asparagine" evidence="2">
    <location>
        <position position="36"/>
    </location>
</feature>
<feature type="disulfide bond" evidence="3">
    <location>
        <begin position="61"/>
        <end position="102"/>
    </location>
</feature>
<feature type="splice variant" id="VSP_001447" description="In isoform A'." evidence="5">
    <original>TPPPVNVHTPRSHIQSDEPEVPLPGVMKSVAGNSAAPGTPCTLYGLLLAALLLRL</original>
    <variation>SE</variation>
    <location>
        <begin position="162"/>
        <end position="216"/>
    </location>
</feature>
<name>EFNA1_XENLA</name>
<organism>
    <name type="scientific">Xenopus laevis</name>
    <name type="common">African clawed frog</name>
    <dbReference type="NCBI Taxonomy" id="8355"/>
    <lineage>
        <taxon>Eukaryota</taxon>
        <taxon>Metazoa</taxon>
        <taxon>Chordata</taxon>
        <taxon>Craniata</taxon>
        <taxon>Vertebrata</taxon>
        <taxon>Euteleostomi</taxon>
        <taxon>Amphibia</taxon>
        <taxon>Batrachia</taxon>
        <taxon>Anura</taxon>
        <taxon>Pipoidea</taxon>
        <taxon>Pipidae</taxon>
        <taxon>Xenopodinae</taxon>
        <taxon>Xenopus</taxon>
        <taxon>Xenopus</taxon>
    </lineage>
</organism>
<keyword id="KW-0025">Alternative splicing</keyword>
<keyword id="KW-1015">Disulfide bond</keyword>
<keyword id="KW-0325">Glycoprotein</keyword>
<keyword id="KW-0336">GPI-anchor</keyword>
<keyword id="KW-0449">Lipoprotein</keyword>
<keyword id="KW-0472">Membrane</keyword>
<keyword id="KW-1185">Reference proteome</keyword>
<keyword id="KW-0732">Signal</keyword>